<gene>
    <name evidence="1" type="primary">NA</name>
</gene>
<name>NRAM_I73A5</name>
<proteinExistence type="inferred from homology"/>
<keyword id="KW-0106">Calcium</keyword>
<keyword id="KW-1015">Disulfide bond</keyword>
<keyword id="KW-0325">Glycoprotein</keyword>
<keyword id="KW-0326">Glycosidase</keyword>
<keyword id="KW-1032">Host cell membrane</keyword>
<keyword id="KW-1043">Host membrane</keyword>
<keyword id="KW-0378">Hydrolase</keyword>
<keyword id="KW-0472">Membrane</keyword>
<keyword id="KW-0479">Metal-binding</keyword>
<keyword id="KW-0735">Signal-anchor</keyword>
<keyword id="KW-0812">Transmembrane</keyword>
<keyword id="KW-1133">Transmembrane helix</keyword>
<keyword id="KW-0946">Virion</keyword>
<protein>
    <recommendedName>
        <fullName evidence="1">Neuraminidase</fullName>
        <ecNumber evidence="1">3.2.1.18</ecNumber>
    </recommendedName>
</protein>
<accession>Q1PUD6</accession>
<comment type="function">
    <text evidence="1">Catalyzes the removal of terminal sialic acid residues from viral and cellular glycoconjugates. Cleaves off the terminal sialic acids on the glycosylated HA during virus budding to facilitate virus release. Additionally helps virus spread through the circulation by further removing sialic acids from the cell surface. These cleavages prevent self-aggregation and ensure the efficient spread of the progeny virus from cell to cell. Otherwise, infection would be limited to one round of replication. Described as a receptor-destroying enzyme because it cleaves a terminal sialic acid from the cellular receptors. May facilitate viral invasion of the upper airways by cleaving the sialic acid moieties on the mucin of the airway epithelial cells. Likely to plays a role in the budding process through its association with lipid rafts during intracellular transport. May additionally display a raft-association independent effect on budding. Plays a role in the determination of host range restriction on replication and virulence. Sialidase activity in late endosome/lysosome traffic seems to enhance virus replication.</text>
</comment>
<comment type="catalytic activity">
    <reaction evidence="1">
        <text>Hydrolysis of alpha-(2-&gt;3)-, alpha-(2-&gt;6)-, alpha-(2-&gt;8)- glycosidic linkages of terminal sialic acid residues in oligosaccharides, glycoproteins, glycolipids, colominic acid and synthetic substrates.</text>
        <dbReference type="EC" id="3.2.1.18"/>
    </reaction>
</comment>
<comment type="cofactor">
    <cofactor evidence="1">
        <name>Ca(2+)</name>
        <dbReference type="ChEBI" id="CHEBI:29108"/>
    </cofactor>
</comment>
<comment type="activity regulation">
    <text evidence="1">Inhibited by the neuraminidase inhibitors zanamivir (Relenza) and oseltamivir (Tamiflu). These drugs interfere with the release of progeny virus from infected cells and are effective against all influenza strains. Resistance to neuraminidase inhibitors is quite rare.</text>
</comment>
<comment type="subunit">
    <text evidence="1">Homotetramer.</text>
</comment>
<comment type="subcellular location">
    <subcellularLocation>
        <location evidence="1">Virion membrane</location>
    </subcellularLocation>
    <subcellularLocation>
        <location evidence="1">Host apical cell membrane</location>
        <topology evidence="1">Single-pass type II membrane protein</topology>
    </subcellularLocation>
    <text evidence="1">Preferentially accumulates at the apical plasma membrane in infected polarized epithelial cells, which is the virus assembly site. Uses lipid rafts for cell surface transport and apical sorting. In the virion, forms a mushroom-shaped spike on the surface of the membrane.</text>
</comment>
<comment type="domain">
    <text evidence="1">Intact N-terminus is essential for virion morphogenesis. Possesses two apical sorting signals, one in the ectodomain, which is likely to be a glycan, and the other in the transmembrane domain. The transmembrane domain also plays a role in lipid raft association.</text>
</comment>
<comment type="PTM">
    <text evidence="1">N-glycosylated.</text>
</comment>
<comment type="miscellaneous">
    <text>The influenza A genome consist of 8 RNA segments. Genetic variation of hemagglutinin and/or neuraminidase genes results in the emergence of new influenza strains. The mechanism of variation can be the result of point mutations or the result of genetic reassortment between segments of two different strains.</text>
</comment>
<comment type="similarity">
    <text evidence="1">Belongs to the glycosyl hydrolase 34 family.</text>
</comment>
<reference key="1">
    <citation type="submission" date="2006-04" db="EMBL/GenBank/DDBJ databases">
        <title>The NIAID influenza genome sequencing project.</title>
        <authorList>
            <person name="Spiro D."/>
            <person name="Ghedin E."/>
            <person name="Sengamalay N."/>
            <person name="Halpin R."/>
            <person name="Boyne A."/>
            <person name="Zaborsky J."/>
            <person name="Feldblyum T."/>
            <person name="Subbu V."/>
            <person name="Sparenborg J."/>
            <person name="Shumway M."/>
            <person name="Sitz J."/>
            <person name="Katzel D."/>
            <person name="Koo H."/>
            <person name="Salzberg S.L."/>
            <person name="Griesemer S."/>
            <person name="St George K."/>
            <person name="Bennett R."/>
            <person name="Taylor J."/>
            <person name="Bennink J.R."/>
            <person name="Yewdell J.W."/>
            <person name="Bao Y."/>
            <person name="Bolotov P."/>
            <person name="Dernovoy D."/>
            <person name="Kiryutin B."/>
            <person name="Lipman D.J."/>
            <person name="Tatusova T."/>
        </authorList>
    </citation>
    <scope>NUCLEOTIDE SEQUENCE [GENOMIC RNA]</scope>
</reference>
<reference key="2">
    <citation type="journal article" date="2004" name="Virus Res.">
        <title>Assembly and budding of influenza virus.</title>
        <authorList>
            <person name="Nayak D.P."/>
            <person name="Hui E.K."/>
            <person name="Barman S."/>
        </authorList>
    </citation>
    <scope>REVIEW</scope>
</reference>
<reference key="3">
    <citation type="journal article" date="2005" name="N. Engl. J. Med.">
        <title>Neuraminidase inhibitors for influenza.</title>
        <authorList>
            <person name="Moscona A."/>
        </authorList>
    </citation>
    <scope>REVIEW</scope>
</reference>
<reference key="4">
    <citation type="journal article" date="2005" name="Biol. Pharm. Bull.">
        <title>Sialobiology of influenza: molecular mechanism of host range variation of influenza viruses.</title>
        <authorList>
            <person name="Suzuki Y."/>
        </authorList>
    </citation>
    <scope>REVIEW</scope>
</reference>
<dbReference type="EC" id="3.2.1.18" evidence="1"/>
<dbReference type="EMBL" id="CY009350">
    <property type="protein sequence ID" value="ABE12548.1"/>
    <property type="molecule type" value="Genomic_RNA"/>
</dbReference>
<dbReference type="SMR" id="Q1PUD6"/>
<dbReference type="CAZy" id="GH34">
    <property type="family name" value="Glycoside Hydrolase Family 34"/>
</dbReference>
<dbReference type="GlyCosmos" id="Q1PUD6">
    <property type="glycosylation" value="7 sites, No reported glycans"/>
</dbReference>
<dbReference type="PRO" id="PR:Q1PUD6"/>
<dbReference type="Proteomes" id="UP000133870">
    <property type="component" value="Genome"/>
</dbReference>
<dbReference type="GO" id="GO:0020002">
    <property type="term" value="C:host cell plasma membrane"/>
    <property type="evidence" value="ECO:0007669"/>
    <property type="project" value="UniProtKB-SubCell"/>
</dbReference>
<dbReference type="GO" id="GO:0016020">
    <property type="term" value="C:membrane"/>
    <property type="evidence" value="ECO:0007669"/>
    <property type="project" value="UniProtKB-UniRule"/>
</dbReference>
<dbReference type="GO" id="GO:0055036">
    <property type="term" value="C:virion membrane"/>
    <property type="evidence" value="ECO:0007669"/>
    <property type="project" value="UniProtKB-SubCell"/>
</dbReference>
<dbReference type="GO" id="GO:0004308">
    <property type="term" value="F:exo-alpha-sialidase activity"/>
    <property type="evidence" value="ECO:0007669"/>
    <property type="project" value="UniProtKB-UniRule"/>
</dbReference>
<dbReference type="GO" id="GO:0046872">
    <property type="term" value="F:metal ion binding"/>
    <property type="evidence" value="ECO:0007669"/>
    <property type="project" value="UniProtKB-UniRule"/>
</dbReference>
<dbReference type="GO" id="GO:0005975">
    <property type="term" value="P:carbohydrate metabolic process"/>
    <property type="evidence" value="ECO:0007669"/>
    <property type="project" value="InterPro"/>
</dbReference>
<dbReference type="GO" id="GO:0046761">
    <property type="term" value="P:viral budding from plasma membrane"/>
    <property type="evidence" value="ECO:0007669"/>
    <property type="project" value="UniProtKB-UniRule"/>
</dbReference>
<dbReference type="CDD" id="cd15483">
    <property type="entry name" value="Influenza_NA"/>
    <property type="match status" value="1"/>
</dbReference>
<dbReference type="Gene3D" id="2.120.10.10">
    <property type="match status" value="1"/>
</dbReference>
<dbReference type="HAMAP" id="MF_04071">
    <property type="entry name" value="INFV_NRAM"/>
    <property type="match status" value="1"/>
</dbReference>
<dbReference type="InterPro" id="IPR001860">
    <property type="entry name" value="Glyco_hydro_34"/>
</dbReference>
<dbReference type="InterPro" id="IPR033654">
    <property type="entry name" value="Sialidase_Influenza_A/B"/>
</dbReference>
<dbReference type="InterPro" id="IPR036278">
    <property type="entry name" value="Sialidase_sf"/>
</dbReference>
<dbReference type="Pfam" id="PF00064">
    <property type="entry name" value="Neur"/>
    <property type="match status" value="1"/>
</dbReference>
<dbReference type="SUPFAM" id="SSF50939">
    <property type="entry name" value="Sialidases"/>
    <property type="match status" value="1"/>
</dbReference>
<sequence length="469" mass="52158">MNPNQKIITIGSVSLIIATICFLMQIAILVTTVTLHFKQYECDSPANNQVMPCEPIIIERNITEIVYLTNTTIEKEICPKLVEYRNWSKPQCKITGFAPFSKDNSIRLSAGGDIWVTREPYVSCDPGKCYQFALGQGTTLDNKHSNDTIHDRTPHRTLLMNELGVPFHLGTRQVCIAWSSSSCHDGKAWLHVCVTGYDKNATASFIYDGRLVDSIGSWSQNILRTQESECVCINGTCTVVMTDGSASGRADTKILFIEEGKIVHISPLSGSAQHVEECSCYPRYPGVRCICRDNWKGSNRPVVDINVKDYSIDSSYVCSGLVGDTPRNNDRSSNSYCRNPNNEKGNHGVKGWAFDDGNDVWMGRTISEDSRSGYETFKVIGGWSTPNSKLQINRQVIVDSDNRSGYSGIFSVEGKSCINRCFYVELIRGREQETRVWWTSNSIVVFCGTSGTYGTGSWPDGADINLMPI</sequence>
<evidence type="ECO:0000255" key="1">
    <source>
        <dbReference type="HAMAP-Rule" id="MF_04071"/>
    </source>
</evidence>
<feature type="chain" id="PRO_0000280147" description="Neuraminidase">
    <location>
        <begin position="1"/>
        <end position="469"/>
    </location>
</feature>
<feature type="topological domain" description="Intravirion" evidence="1">
    <location>
        <begin position="1"/>
        <end position="9"/>
    </location>
</feature>
<feature type="transmembrane region" description="Helical" evidence="1">
    <location>
        <begin position="10"/>
        <end position="30"/>
    </location>
</feature>
<feature type="topological domain" description="Virion surface" evidence="1">
    <location>
        <begin position="31"/>
        <end position="469"/>
    </location>
</feature>
<feature type="region of interest" description="Involved in apical transport and lipid raft association" evidence="1">
    <location>
        <begin position="11"/>
        <end position="33"/>
    </location>
</feature>
<feature type="region of interest" description="Hypervariable stalk region" evidence="1">
    <location>
        <begin position="36"/>
        <end position="88"/>
    </location>
</feature>
<feature type="region of interest" description="Head of neuraminidase" evidence="1">
    <location>
        <begin position="91"/>
        <end position="469"/>
    </location>
</feature>
<feature type="active site" description="Proton donor/acceptor" evidence="1">
    <location>
        <position position="151"/>
    </location>
</feature>
<feature type="active site" description="Nucleophile" evidence="1">
    <location>
        <position position="406"/>
    </location>
</feature>
<feature type="binding site" evidence="1">
    <location>
        <position position="118"/>
    </location>
    <ligand>
        <name>substrate</name>
    </ligand>
</feature>
<feature type="binding site" evidence="1">
    <location>
        <position position="152"/>
    </location>
    <ligand>
        <name>substrate</name>
    </ligand>
</feature>
<feature type="binding site" evidence="1">
    <location>
        <begin position="276"/>
        <end position="277"/>
    </location>
    <ligand>
        <name>substrate</name>
    </ligand>
</feature>
<feature type="binding site" evidence="1">
    <location>
        <position position="292"/>
    </location>
    <ligand>
        <name>substrate</name>
    </ligand>
</feature>
<feature type="binding site" evidence="1">
    <location>
        <position position="293"/>
    </location>
    <ligand>
        <name>Ca(2+)</name>
        <dbReference type="ChEBI" id="CHEBI:29108"/>
    </ligand>
</feature>
<feature type="binding site" evidence="1">
    <location>
        <position position="297"/>
    </location>
    <ligand>
        <name>Ca(2+)</name>
        <dbReference type="ChEBI" id="CHEBI:29108"/>
    </ligand>
</feature>
<feature type="binding site" evidence="1">
    <location>
        <position position="324"/>
    </location>
    <ligand>
        <name>Ca(2+)</name>
        <dbReference type="ChEBI" id="CHEBI:29108"/>
    </ligand>
</feature>
<feature type="binding site" evidence="1">
    <location>
        <position position="371"/>
    </location>
    <ligand>
        <name>substrate</name>
    </ligand>
</feature>
<feature type="glycosylation site" description="N-linked (GlcNAc...) asparagine; by host" evidence="1">
    <location>
        <position position="61"/>
    </location>
</feature>
<feature type="glycosylation site" description="N-linked (GlcNAc...) asparagine; by host" evidence="1">
    <location>
        <position position="70"/>
    </location>
</feature>
<feature type="glycosylation site" description="N-linked (GlcNAc...) asparagine; by host" evidence="1">
    <location>
        <position position="86"/>
    </location>
</feature>
<feature type="glycosylation site" description="N-linked (GlcNAc...) asparagine; by host" evidence="1">
    <location>
        <position position="146"/>
    </location>
</feature>
<feature type="glycosylation site" description="N-linked (GlcNAc...) asparagine; by host" evidence="1">
    <location>
        <position position="200"/>
    </location>
</feature>
<feature type="glycosylation site" description="N-linked (GlcNAc...) asparagine; by host" evidence="1">
    <location>
        <position position="234"/>
    </location>
</feature>
<feature type="glycosylation site" description="N-linked (GlcNAc...) asparagine; by host" evidence="1">
    <location>
        <position position="402"/>
    </location>
</feature>
<feature type="disulfide bond" evidence="1">
    <location>
        <begin position="92"/>
        <end position="417"/>
    </location>
</feature>
<feature type="disulfide bond" evidence="1">
    <location>
        <begin position="124"/>
        <end position="129"/>
    </location>
</feature>
<feature type="disulfide bond" evidence="1">
    <location>
        <begin position="183"/>
        <end position="230"/>
    </location>
</feature>
<feature type="disulfide bond" evidence="1">
    <location>
        <begin position="232"/>
        <end position="237"/>
    </location>
</feature>
<feature type="disulfide bond" evidence="1">
    <location>
        <begin position="278"/>
        <end position="291"/>
    </location>
</feature>
<feature type="disulfide bond" evidence="1">
    <location>
        <begin position="280"/>
        <end position="289"/>
    </location>
</feature>
<feature type="disulfide bond" evidence="1">
    <location>
        <begin position="318"/>
        <end position="337"/>
    </location>
</feature>
<feature type="disulfide bond" evidence="1">
    <location>
        <begin position="421"/>
        <end position="447"/>
    </location>
</feature>
<organismHost>
    <name type="scientific">Aves</name>
    <dbReference type="NCBI Taxonomy" id="8782"/>
</organismHost>
<organismHost>
    <name type="scientific">Cetacea</name>
    <name type="common">whales</name>
    <dbReference type="NCBI Taxonomy" id="9721"/>
</organismHost>
<organismHost>
    <name type="scientific">Homo sapiens</name>
    <name type="common">Human</name>
    <dbReference type="NCBI Taxonomy" id="9606"/>
</organismHost>
<organismHost>
    <name type="scientific">Phocidae</name>
    <name type="common">true seals</name>
    <dbReference type="NCBI Taxonomy" id="9709"/>
</organismHost>
<organismHost>
    <name type="scientific">Sus scrofa</name>
    <name type="common">Pig</name>
    <dbReference type="NCBI Taxonomy" id="9823"/>
</organismHost>
<organism>
    <name type="scientific">Influenza A virus (strain A/Port Chalmers/1/1973 H3N2)</name>
    <dbReference type="NCBI Taxonomy" id="385624"/>
    <lineage>
        <taxon>Viruses</taxon>
        <taxon>Riboviria</taxon>
        <taxon>Orthornavirae</taxon>
        <taxon>Negarnaviricota</taxon>
        <taxon>Polyploviricotina</taxon>
        <taxon>Insthoviricetes</taxon>
        <taxon>Articulavirales</taxon>
        <taxon>Orthomyxoviridae</taxon>
        <taxon>Alphainfluenzavirus</taxon>
        <taxon>Alphainfluenzavirus influenzae</taxon>
        <taxon>Influenza A virus</taxon>
    </lineage>
</organism>